<protein>
    <recommendedName>
        <fullName>Fusion glycoprotein F0</fullName>
    </recommendedName>
    <component>
        <recommendedName>
            <fullName>Fusion glycoprotein F2</fullName>
        </recommendedName>
    </component>
    <component>
        <recommendedName>
            <fullName>Fusion glycoprotein F1</fullName>
        </recommendedName>
    </component>
</protein>
<evidence type="ECO:0000250" key="1"/>
<evidence type="ECO:0000255" key="2"/>
<evidence type="ECO:0000269" key="3">
    <source>
    </source>
</evidence>
<evidence type="ECO:0000305" key="4"/>
<evidence type="ECO:0007829" key="5">
    <source>
        <dbReference type="PDB" id="1G5G"/>
    </source>
</evidence>
<comment type="function">
    <text evidence="1">Class I viral fusion protein. Under the current model, the protein has at least 3 conformational states: pre-fusion native state, pre-hairpin intermediate state, and post-fusion hairpin state. During viral and plasma cell membrane fusion, the heptad repeat (HR) regions assume a trimer-of-hairpins structure, positioning the fusion peptide in close proximity to the C-terminal region of the ectodomain. The formation of this structure appears to drive apposition and subsequent fusion of viral and plasma cell membranes. Directs fusion of viral and cellular membranes leading to delivery of the nucleocapsid into the cytoplasm. This fusion is pH independent and occurs directly at the outer cell membrane. The trimer of F1-F2 (F protein) probably interacts with HN at the virion surface. Upon HN binding to its cellular receptor, the hydrophobic fusion peptide is unmasked and interacts with the cellular membrane, inducing the fusion between cell and virion membranes. Later in infection, F proteins expressed at the plasma membrane of infected cells could mediate fusion with adjacent cells to form syncytia, a cytopathic effect that could lead to tissue necrosis (By similarity).</text>
</comment>
<comment type="subunit">
    <text evidence="1">Homotrimer of disulfide-linked F1-F2.</text>
</comment>
<comment type="subcellular location">
    <subcellularLocation>
        <location evidence="1">Virion membrane</location>
        <topology evidence="1">Single-pass type I membrane protein</topology>
    </subcellularLocation>
    <subcellularLocation>
        <location evidence="1">Host cell membrane</location>
        <topology evidence="1">Single-pass membrane protein</topology>
    </subcellularLocation>
</comment>
<comment type="PTM">
    <text evidence="1">The inactive precursor F0 is glycosylated and proteolytically cleaved into F1 and F2 to be functionally active. The cleavage is mediated by cellular proteases during the transport and maturation of the polypeptide (By similarity).</text>
</comment>
<comment type="similarity">
    <text evidence="4">Belongs to the paramyxoviruses fusion glycoprotein family.</text>
</comment>
<proteinExistence type="evidence at protein level"/>
<dbReference type="EMBL" id="M24692">
    <property type="protein sequence ID" value="AAA46643.1"/>
    <property type="molecule type" value="Genomic_RNA"/>
</dbReference>
<dbReference type="PIR" id="A46329">
    <property type="entry name" value="A46329"/>
</dbReference>
<dbReference type="PDB" id="1G5G">
    <property type="method" value="X-ray"/>
    <property type="resolution" value="3.30 A"/>
    <property type="chains" value="A/B/C/D/E/F=32-499"/>
</dbReference>
<dbReference type="PDBsum" id="1G5G"/>
<dbReference type="SMR" id="P35936"/>
<dbReference type="GlyCosmos" id="P35936">
    <property type="glycosylation" value="5 sites, No reported glycans"/>
</dbReference>
<dbReference type="iPTMnet" id="P35936"/>
<dbReference type="EvolutionaryTrace" id="P35936"/>
<dbReference type="GO" id="GO:0020002">
    <property type="term" value="C:host cell plasma membrane"/>
    <property type="evidence" value="ECO:0007669"/>
    <property type="project" value="UniProtKB-SubCell"/>
</dbReference>
<dbReference type="GO" id="GO:0016020">
    <property type="term" value="C:membrane"/>
    <property type="evidence" value="ECO:0007669"/>
    <property type="project" value="UniProtKB-KW"/>
</dbReference>
<dbReference type="GO" id="GO:0019031">
    <property type="term" value="C:viral envelope"/>
    <property type="evidence" value="ECO:0007669"/>
    <property type="project" value="UniProtKB-KW"/>
</dbReference>
<dbReference type="GO" id="GO:0055036">
    <property type="term" value="C:virion membrane"/>
    <property type="evidence" value="ECO:0007669"/>
    <property type="project" value="UniProtKB-SubCell"/>
</dbReference>
<dbReference type="GO" id="GO:0019064">
    <property type="term" value="P:fusion of virus membrane with host plasma membrane"/>
    <property type="evidence" value="ECO:0007669"/>
    <property type="project" value="UniProtKB-KW"/>
</dbReference>
<dbReference type="GO" id="GO:0046718">
    <property type="term" value="P:symbiont entry into host cell"/>
    <property type="evidence" value="ECO:0007669"/>
    <property type="project" value="UniProtKB-KW"/>
</dbReference>
<dbReference type="Gene3D" id="1.10.287.2480">
    <property type="match status" value="1"/>
</dbReference>
<dbReference type="Gene3D" id="6.10.10.110">
    <property type="match status" value="1"/>
</dbReference>
<dbReference type="Gene3D" id="2.60.40.1690">
    <property type="entry name" value="Head and neck region of the ectodomain of NDV fusion glycoprotein"/>
    <property type="match status" value="1"/>
</dbReference>
<dbReference type="Gene3D" id="2.40.490.10">
    <property type="entry name" value="Newcastle disease virus like domain"/>
    <property type="match status" value="1"/>
</dbReference>
<dbReference type="InterPro" id="IPR000776">
    <property type="entry name" value="Fusion_F0_Paramyxovir"/>
</dbReference>
<dbReference type="Pfam" id="PF00523">
    <property type="entry name" value="Fusion_gly"/>
    <property type="match status" value="1"/>
</dbReference>
<dbReference type="SUPFAM" id="SSF69922">
    <property type="entry name" value="Head and neck region of the ectodomain of NDV fusion glycoprotein"/>
    <property type="match status" value="1"/>
</dbReference>
<dbReference type="SUPFAM" id="SSF58069">
    <property type="entry name" value="Virus ectodomain"/>
    <property type="match status" value="1"/>
</dbReference>
<keyword id="KW-0002">3D-structure</keyword>
<keyword id="KW-0175">Coiled coil</keyword>
<keyword id="KW-1015">Disulfide bond</keyword>
<keyword id="KW-1169">Fusion of virus membrane with host cell membrane</keyword>
<keyword id="KW-1168">Fusion of virus membrane with host membrane</keyword>
<keyword id="KW-0325">Glycoprotein</keyword>
<keyword id="KW-1032">Host cell membrane</keyword>
<keyword id="KW-1043">Host membrane</keyword>
<keyword id="KW-0449">Lipoprotein</keyword>
<keyword id="KW-0472">Membrane</keyword>
<keyword id="KW-0564">Palmitate</keyword>
<keyword id="KW-0732">Signal</keyword>
<keyword id="KW-0812">Transmembrane</keyword>
<keyword id="KW-1133">Transmembrane helix</keyword>
<keyword id="KW-0261">Viral envelope protein</keyword>
<keyword id="KW-1162">Viral penetration into host cytoplasm</keyword>
<keyword id="KW-0946">Virion</keyword>
<keyword id="KW-1160">Virus entry into host cell</keyword>
<accession>P35936</accession>
<organism>
    <name type="scientific">Newcastle disease virus (strain D26/76)</name>
    <name type="common">NDV</name>
    <dbReference type="NCBI Taxonomy" id="11180"/>
    <lineage>
        <taxon>Viruses</taxon>
        <taxon>Riboviria</taxon>
        <taxon>Orthornavirae</taxon>
        <taxon>Negarnaviricota</taxon>
        <taxon>Haploviricotina</taxon>
        <taxon>Monjiviricetes</taxon>
        <taxon>Mononegavirales</taxon>
        <taxon>Paramyxoviridae</taxon>
        <taxon>Avulavirinae</taxon>
        <taxon>Orthoavulavirus</taxon>
        <taxon>Orthoavulavirus javaense</taxon>
        <taxon>Avian paramyxovirus 1</taxon>
    </lineage>
</organism>
<sequence>MGSRSSTRIPVPLMLTVRIMLALSCVCPTSSLDGRPLAAAGIVVTGDKAVNIYTSSQTGSIIIKLLPNMPKDKEACAKAPLEAYNRTLTTLLTPLGDSIRRIQESVTTSGGGKQGRLIGAIIGGVALGVATAAQITAASALIQANQNAANILRLKESIAATNEAVHEVTDGLSQLAVAVGKMQQFVNDQFNKTAQELDCIKITQQVGVELNLYLTELTTVFGPQITSPALTQLTIQALYNLAGGNMDYLLTKLGVGNNQLSSLIGSGLITGNPILYDSQTQLLGIQVTLPSVGNLNNMRATYLETLSVSTTKGFASALVPKVVTQVGSVIEELDTSYCIETDLDLYCTRIVTFPMSPGIYSCLSGNTSACMYSKTEGALTTPYMTLKGSVIANCKMTTCRCADPPGIISQNYGEAVSLIDRQSCNILSLDGITLRLSGEFDATYQKNISIQDSQVIVTGNLDISTELGNVNNSISNALDKLEESNSKLDKVNVKLTSTSALITYIFLTVISLVCGILSLVLACYLMYKQKAQQKTLLWLGNNTLDQMRATTKM</sequence>
<name>FUS_NDVD</name>
<gene>
    <name type="primary">F</name>
</gene>
<feature type="signal peptide" evidence="2">
    <location>
        <begin position="1"/>
        <end position="31"/>
    </location>
</feature>
<feature type="chain" id="PRO_0000039297" description="Fusion glycoprotein F0">
    <location>
        <begin position="32"/>
        <end position="553"/>
    </location>
</feature>
<feature type="chain" id="PRO_0000039298" description="Fusion glycoprotein F2">
    <location>
        <begin position="32"/>
        <end position="116"/>
    </location>
</feature>
<feature type="chain" id="PRO_0000039299" description="Fusion glycoprotein F1">
    <location>
        <begin position="117"/>
        <end position="553"/>
    </location>
</feature>
<feature type="topological domain" description="Extracellular" evidence="1">
    <location>
        <begin position="32"/>
        <end position="500"/>
    </location>
</feature>
<feature type="transmembrane region" description="Helical" evidence="1">
    <location>
        <begin position="501"/>
        <end position="521"/>
    </location>
</feature>
<feature type="topological domain" description="Cytoplasmic" evidence="1">
    <location>
        <begin position="522"/>
        <end position="553"/>
    </location>
</feature>
<feature type="region of interest" description="Fusion peptide" evidence="1">
    <location>
        <begin position="117"/>
        <end position="141"/>
    </location>
</feature>
<feature type="coiled-coil region" evidence="2">
    <location>
        <begin position="142"/>
        <end position="170"/>
    </location>
</feature>
<feature type="coiled-coil region" evidence="2">
    <location>
        <begin position="466"/>
        <end position="491"/>
    </location>
</feature>
<feature type="site" description="Cleavage; by host" evidence="1">
    <location>
        <begin position="116"/>
        <end position="117"/>
    </location>
</feature>
<feature type="lipid moiety-binding region" description="S-palmitoyl cysteine; by host" evidence="2">
    <location>
        <position position="523"/>
    </location>
</feature>
<feature type="glycosylation site" description="N-linked (GlcNAc...) asparagine; by host" evidence="3">
    <location>
        <position position="85"/>
    </location>
</feature>
<feature type="glycosylation site" description="N-linked (GlcNAc...) asparagine; by host" evidence="2">
    <location>
        <position position="191"/>
    </location>
</feature>
<feature type="glycosylation site" description="N-linked (GlcNAc...) asparagine; by host" evidence="2">
    <location>
        <position position="366"/>
    </location>
</feature>
<feature type="glycosylation site" description="N-linked (GlcNAc...) asparagine; by host" evidence="3">
    <location>
        <position position="447"/>
    </location>
</feature>
<feature type="glycosylation site" description="N-linked (GlcNAc...) asparagine; by host" evidence="2">
    <location>
        <position position="471"/>
    </location>
</feature>
<feature type="disulfide bond" description="Interchain (between F2 and F1 chains)" evidence="3">
    <location>
        <begin position="76"/>
        <end position="199"/>
    </location>
</feature>
<feature type="disulfide bond" evidence="3">
    <location>
        <begin position="338"/>
        <end position="347"/>
    </location>
</feature>
<feature type="disulfide bond" evidence="3">
    <location>
        <begin position="362"/>
        <end position="370"/>
    </location>
</feature>
<feature type="disulfide bond" evidence="3">
    <location>
        <begin position="394"/>
        <end position="399"/>
    </location>
</feature>
<feature type="disulfide bond" evidence="3">
    <location>
        <begin position="401"/>
        <end position="424"/>
    </location>
</feature>
<feature type="helix" evidence="5">
    <location>
        <begin position="36"/>
        <end position="38"/>
    </location>
</feature>
<feature type="turn" evidence="5">
    <location>
        <begin position="39"/>
        <end position="41"/>
    </location>
</feature>
<feature type="strand" evidence="5">
    <location>
        <begin position="42"/>
        <end position="52"/>
    </location>
</feature>
<feature type="strand" evidence="5">
    <location>
        <begin position="59"/>
        <end position="66"/>
    </location>
</feature>
<feature type="helix" evidence="5">
    <location>
        <begin position="74"/>
        <end position="104"/>
    </location>
</feature>
<feature type="helix" evidence="5">
    <location>
        <begin position="172"/>
        <end position="226"/>
    </location>
</feature>
<feature type="helix" evidence="5">
    <location>
        <begin position="235"/>
        <end position="241"/>
    </location>
</feature>
<feature type="turn" evidence="5">
    <location>
        <begin position="242"/>
        <end position="244"/>
    </location>
</feature>
<feature type="helix" evidence="5">
    <location>
        <begin position="246"/>
        <end position="253"/>
    </location>
</feature>
<feature type="helix" evidence="5">
    <location>
        <begin position="257"/>
        <end position="259"/>
    </location>
</feature>
<feature type="helix" evidence="5">
    <location>
        <begin position="260"/>
        <end position="266"/>
    </location>
</feature>
<feature type="strand" evidence="5">
    <location>
        <begin position="269"/>
        <end position="271"/>
    </location>
</feature>
<feature type="strand" evidence="5">
    <location>
        <begin position="273"/>
        <end position="277"/>
    </location>
</feature>
<feature type="turn" evidence="5">
    <location>
        <begin position="278"/>
        <end position="281"/>
    </location>
</feature>
<feature type="strand" evidence="5">
    <location>
        <begin position="282"/>
        <end position="288"/>
    </location>
</feature>
<feature type="strand" evidence="5">
    <location>
        <begin position="293"/>
        <end position="305"/>
    </location>
</feature>
<feature type="strand" evidence="5">
    <location>
        <begin position="321"/>
        <end position="326"/>
    </location>
</feature>
<feature type="strand" evidence="5">
    <location>
        <begin position="331"/>
        <end position="333"/>
    </location>
</feature>
<feature type="helix" evidence="5">
    <location>
        <begin position="335"/>
        <end position="337"/>
    </location>
</feature>
<feature type="strand" evidence="5">
    <location>
        <begin position="338"/>
        <end position="340"/>
    </location>
</feature>
<feature type="strand" evidence="5">
    <location>
        <begin position="342"/>
        <end position="348"/>
    </location>
</feature>
<feature type="helix" evidence="5">
    <location>
        <begin position="357"/>
        <end position="363"/>
    </location>
</feature>
<feature type="strand" evidence="5">
    <location>
        <begin position="382"/>
        <end position="385"/>
    </location>
</feature>
<feature type="strand" evidence="5">
    <location>
        <begin position="387"/>
        <end position="392"/>
    </location>
</feature>
<feature type="turn" evidence="5">
    <location>
        <begin position="394"/>
        <end position="396"/>
    </location>
</feature>
<feature type="strand" evidence="5">
    <location>
        <begin position="402"/>
        <end position="404"/>
    </location>
</feature>
<feature type="turn" evidence="5">
    <location>
        <begin position="412"/>
        <end position="414"/>
    </location>
</feature>
<feature type="turn" evidence="5">
    <location>
        <begin position="421"/>
        <end position="423"/>
    </location>
</feature>
<feature type="strand" evidence="5">
    <location>
        <begin position="441"/>
        <end position="444"/>
    </location>
</feature>
<reference key="1">
    <citation type="journal article" date="1989" name="Virology">
        <title>Newcastle disease virus evolution. II. Lack of gene recombination in generating virulent and avirulent strains.</title>
        <authorList>
            <person name="Toyoda T."/>
            <person name="Sakaguchi T."/>
            <person name="Hirota H."/>
            <person name="Gotoh B."/>
            <person name="Kuma K."/>
            <person name="Miyata T."/>
            <person name="Nagai Y."/>
        </authorList>
    </citation>
    <scope>NUCLEOTIDE SEQUENCE [GENOMIC RNA]</scope>
</reference>
<reference key="2">
    <citation type="journal article" date="2001" name="Structure">
        <title>The structure of the fusion glycoprotein of Newcastle disease virus suggests a novel paradigm for the molecular mechanism of membrane fusion.</title>
        <authorList>
            <person name="Chen L."/>
            <person name="Gorman J.J."/>
            <person name="McKimm-Breschkin J."/>
            <person name="Lawrence L.J."/>
            <person name="Tulloch P.A."/>
            <person name="Smith B.J."/>
            <person name="Colman P.M."/>
            <person name="Lawrence M.C."/>
        </authorList>
    </citation>
    <scope>X-RAY CRYSTALLOGRAPHY (3.3 ANGSTROMS) OF 32-499</scope>
    <scope>GLYCOSYLATION AT ASN-85 AND ASN-447</scope>
    <scope>DISULFIDE BONDS</scope>
</reference>
<organismHost>
    <name type="scientific">Gallus gallus</name>
    <name type="common">Chicken</name>
    <dbReference type="NCBI Taxonomy" id="9031"/>
</organismHost>